<feature type="transit peptide" description="Mitochondrion" evidence="2">
    <location>
        <begin position="1"/>
        <end position="28"/>
    </location>
</feature>
<feature type="chain" id="PRO_0000273096" description="Large ribosomal subunit protein mL52">
    <location>
        <begin position="29"/>
        <end position="126"/>
    </location>
</feature>
<protein>
    <recommendedName>
        <fullName evidence="3">Large ribosomal subunit protein mL52</fullName>
    </recommendedName>
    <alternativeName>
        <fullName>39S ribosomal protein L52, mitochondrial</fullName>
        <shortName>L52mt</shortName>
        <shortName>MRP-L52</shortName>
    </alternativeName>
</protein>
<keyword id="KW-0496">Mitochondrion</keyword>
<keyword id="KW-1185">Reference proteome</keyword>
<keyword id="KW-0687">Ribonucleoprotein</keyword>
<keyword id="KW-0689">Ribosomal protein</keyword>
<keyword id="KW-0809">Transit peptide</keyword>
<comment type="subunit">
    <text evidence="1">Component of the mitochondrial ribosome large subunit (39S) which comprises a 16S rRNA and about 50 distinct proteins.</text>
</comment>
<comment type="subcellular location">
    <subcellularLocation>
        <location evidence="1">Mitochondrion</location>
    </subcellularLocation>
</comment>
<comment type="similarity">
    <text evidence="3">Belongs to the mitochondrion-specific ribosomal protein mL52 family.</text>
</comment>
<dbReference type="EMBL" id="AE013599">
    <property type="protein sequence ID" value="AAF59209.1"/>
    <property type="molecule type" value="Genomic_DNA"/>
</dbReference>
<dbReference type="EMBL" id="AY113553">
    <property type="protein sequence ID" value="AAM29558.1"/>
    <property type="molecule type" value="mRNA"/>
</dbReference>
<dbReference type="RefSeq" id="NP_610313.1">
    <property type="nucleotide sequence ID" value="NM_136469.4"/>
</dbReference>
<dbReference type="SMR" id="Q7JWG9"/>
<dbReference type="BioGRID" id="61585">
    <property type="interactions" value="2"/>
</dbReference>
<dbReference type="FunCoup" id="Q7JWG9">
    <property type="interactions" value="373"/>
</dbReference>
<dbReference type="IntAct" id="Q7JWG9">
    <property type="interactions" value="11"/>
</dbReference>
<dbReference type="STRING" id="7227.FBpp0088016"/>
<dbReference type="PaxDb" id="7227-FBpp0088016"/>
<dbReference type="DNASU" id="35711"/>
<dbReference type="EnsemblMetazoa" id="FBtr0088942">
    <property type="protein sequence ID" value="FBpp0088016"/>
    <property type="gene ID" value="FBgn0033208"/>
</dbReference>
<dbReference type="GeneID" id="35711"/>
<dbReference type="KEGG" id="dme:Dmel_CG1577"/>
<dbReference type="AGR" id="FB:FBgn0033208"/>
<dbReference type="CTD" id="122704"/>
<dbReference type="FlyBase" id="FBgn0033208">
    <property type="gene designation" value="mRpL52"/>
</dbReference>
<dbReference type="VEuPathDB" id="VectorBase:FBgn0033208"/>
<dbReference type="eggNOG" id="ENOG502S4I0">
    <property type="taxonomic scope" value="Eukaryota"/>
</dbReference>
<dbReference type="GeneTree" id="ENSGT00390000005763"/>
<dbReference type="HOGENOM" id="CLU_135844_1_0_1"/>
<dbReference type="InParanoid" id="Q7JWG9"/>
<dbReference type="OMA" id="RSIDQKW"/>
<dbReference type="OrthoDB" id="10249237at2759"/>
<dbReference type="PhylomeDB" id="Q7JWG9"/>
<dbReference type="Reactome" id="R-DME-5389840">
    <property type="pathway name" value="Mitochondrial translation elongation"/>
</dbReference>
<dbReference type="Reactome" id="R-DME-5419276">
    <property type="pathway name" value="Mitochondrial translation termination"/>
</dbReference>
<dbReference type="SignaLink" id="Q7JWG9"/>
<dbReference type="BioGRID-ORCS" id="35711">
    <property type="hits" value="1 hit in 1 CRISPR screen"/>
</dbReference>
<dbReference type="GenomeRNAi" id="35711"/>
<dbReference type="PRO" id="PR:Q7JWG9"/>
<dbReference type="Proteomes" id="UP000000803">
    <property type="component" value="Chromosome 2R"/>
</dbReference>
<dbReference type="Bgee" id="FBgn0033208">
    <property type="expression patterns" value="Expressed in adult class III enteroendocrine cell in adult midgut (Drosophila) and 129 other cell types or tissues"/>
</dbReference>
<dbReference type="ExpressionAtlas" id="Q7JWG9">
    <property type="expression patterns" value="baseline and differential"/>
</dbReference>
<dbReference type="GO" id="GO:0005762">
    <property type="term" value="C:mitochondrial large ribosomal subunit"/>
    <property type="evidence" value="ECO:0000250"/>
    <property type="project" value="UniProtKB"/>
</dbReference>
<dbReference type="GO" id="GO:0003735">
    <property type="term" value="F:structural constituent of ribosome"/>
    <property type="evidence" value="ECO:0000250"/>
    <property type="project" value="UniProtKB"/>
</dbReference>
<dbReference type="GO" id="GO:0032543">
    <property type="term" value="P:mitochondrial translation"/>
    <property type="evidence" value="ECO:0000304"/>
    <property type="project" value="FlyBase"/>
</dbReference>
<dbReference type="GO" id="GO:0006412">
    <property type="term" value="P:translation"/>
    <property type="evidence" value="ECO:0000250"/>
    <property type="project" value="UniProtKB"/>
</dbReference>
<dbReference type="InterPro" id="IPR034596">
    <property type="entry name" value="Ribosomal_mL52"/>
</dbReference>
<dbReference type="PANTHER" id="PTHR34090">
    <property type="entry name" value="39S RIBOSOMAL PROTEIN L52, MITOCHONDRIAL"/>
    <property type="match status" value="1"/>
</dbReference>
<dbReference type="PANTHER" id="PTHR34090:SF1">
    <property type="entry name" value="LARGE RIBOSOMAL SUBUNIT PROTEIN ML52"/>
    <property type="match status" value="1"/>
</dbReference>
<dbReference type="Pfam" id="PF18699">
    <property type="entry name" value="MRPL52"/>
    <property type="match status" value="1"/>
</dbReference>
<organism>
    <name type="scientific">Drosophila melanogaster</name>
    <name type="common">Fruit fly</name>
    <dbReference type="NCBI Taxonomy" id="7227"/>
    <lineage>
        <taxon>Eukaryota</taxon>
        <taxon>Metazoa</taxon>
        <taxon>Ecdysozoa</taxon>
        <taxon>Arthropoda</taxon>
        <taxon>Hexapoda</taxon>
        <taxon>Insecta</taxon>
        <taxon>Pterygota</taxon>
        <taxon>Neoptera</taxon>
        <taxon>Endopterygota</taxon>
        <taxon>Diptera</taxon>
        <taxon>Brachycera</taxon>
        <taxon>Muscomorpha</taxon>
        <taxon>Ephydroidea</taxon>
        <taxon>Drosophilidae</taxon>
        <taxon>Drosophila</taxon>
        <taxon>Sophophora</taxon>
    </lineage>
</organism>
<proteinExistence type="evidence at transcript level"/>
<sequence length="126" mass="14187">MLKITKICLASSATSTAQRSIALTAPRAIDQKWRAAKGLPENPNAFGPLTNLPDYTYLDGRPTPLGANQKRRLIKQQEIATRIVELSGELEFAKQRHERLKANAESEKQRLIRSKLKPKGHFLLKK</sequence>
<evidence type="ECO:0000250" key="1">
    <source>
        <dbReference type="UniProtKB" id="Q86TS9"/>
    </source>
</evidence>
<evidence type="ECO:0000255" key="2"/>
<evidence type="ECO:0000305" key="3"/>
<gene>
    <name type="primary">mRpL52</name>
    <name type="ORF">CG1577</name>
</gene>
<name>RM52_DROME</name>
<accession>Q7JWG9</accession>
<accession>A1Z732</accession>
<reference key="1">
    <citation type="journal article" date="2000" name="Science">
        <title>The genome sequence of Drosophila melanogaster.</title>
        <authorList>
            <person name="Adams M.D."/>
            <person name="Celniker S.E."/>
            <person name="Holt R.A."/>
            <person name="Evans C.A."/>
            <person name="Gocayne J.D."/>
            <person name="Amanatides P.G."/>
            <person name="Scherer S.E."/>
            <person name="Li P.W."/>
            <person name="Hoskins R.A."/>
            <person name="Galle R.F."/>
            <person name="George R.A."/>
            <person name="Lewis S.E."/>
            <person name="Richards S."/>
            <person name="Ashburner M."/>
            <person name="Henderson S.N."/>
            <person name="Sutton G.G."/>
            <person name="Wortman J.R."/>
            <person name="Yandell M.D."/>
            <person name="Zhang Q."/>
            <person name="Chen L.X."/>
            <person name="Brandon R.C."/>
            <person name="Rogers Y.-H.C."/>
            <person name="Blazej R.G."/>
            <person name="Champe M."/>
            <person name="Pfeiffer B.D."/>
            <person name="Wan K.H."/>
            <person name="Doyle C."/>
            <person name="Baxter E.G."/>
            <person name="Helt G."/>
            <person name="Nelson C.R."/>
            <person name="Miklos G.L.G."/>
            <person name="Abril J.F."/>
            <person name="Agbayani A."/>
            <person name="An H.-J."/>
            <person name="Andrews-Pfannkoch C."/>
            <person name="Baldwin D."/>
            <person name="Ballew R.M."/>
            <person name="Basu A."/>
            <person name="Baxendale J."/>
            <person name="Bayraktaroglu L."/>
            <person name="Beasley E.M."/>
            <person name="Beeson K.Y."/>
            <person name="Benos P.V."/>
            <person name="Berman B.P."/>
            <person name="Bhandari D."/>
            <person name="Bolshakov S."/>
            <person name="Borkova D."/>
            <person name="Botchan M.R."/>
            <person name="Bouck J."/>
            <person name="Brokstein P."/>
            <person name="Brottier P."/>
            <person name="Burtis K.C."/>
            <person name="Busam D.A."/>
            <person name="Butler H."/>
            <person name="Cadieu E."/>
            <person name="Center A."/>
            <person name="Chandra I."/>
            <person name="Cherry J.M."/>
            <person name="Cawley S."/>
            <person name="Dahlke C."/>
            <person name="Davenport L.B."/>
            <person name="Davies P."/>
            <person name="de Pablos B."/>
            <person name="Delcher A."/>
            <person name="Deng Z."/>
            <person name="Mays A.D."/>
            <person name="Dew I."/>
            <person name="Dietz S.M."/>
            <person name="Dodson K."/>
            <person name="Doup L.E."/>
            <person name="Downes M."/>
            <person name="Dugan-Rocha S."/>
            <person name="Dunkov B.C."/>
            <person name="Dunn P."/>
            <person name="Durbin K.J."/>
            <person name="Evangelista C.C."/>
            <person name="Ferraz C."/>
            <person name="Ferriera S."/>
            <person name="Fleischmann W."/>
            <person name="Fosler C."/>
            <person name="Gabrielian A.E."/>
            <person name="Garg N.S."/>
            <person name="Gelbart W.M."/>
            <person name="Glasser K."/>
            <person name="Glodek A."/>
            <person name="Gong F."/>
            <person name="Gorrell J.H."/>
            <person name="Gu Z."/>
            <person name="Guan P."/>
            <person name="Harris M."/>
            <person name="Harris N.L."/>
            <person name="Harvey D.A."/>
            <person name="Heiman T.J."/>
            <person name="Hernandez J.R."/>
            <person name="Houck J."/>
            <person name="Hostin D."/>
            <person name="Houston K.A."/>
            <person name="Howland T.J."/>
            <person name="Wei M.-H."/>
            <person name="Ibegwam C."/>
            <person name="Jalali M."/>
            <person name="Kalush F."/>
            <person name="Karpen G.H."/>
            <person name="Ke Z."/>
            <person name="Kennison J.A."/>
            <person name="Ketchum K.A."/>
            <person name="Kimmel B.E."/>
            <person name="Kodira C.D."/>
            <person name="Kraft C.L."/>
            <person name="Kravitz S."/>
            <person name="Kulp D."/>
            <person name="Lai Z."/>
            <person name="Lasko P."/>
            <person name="Lei Y."/>
            <person name="Levitsky A.A."/>
            <person name="Li J.H."/>
            <person name="Li Z."/>
            <person name="Liang Y."/>
            <person name="Lin X."/>
            <person name="Liu X."/>
            <person name="Mattei B."/>
            <person name="McIntosh T.C."/>
            <person name="McLeod M.P."/>
            <person name="McPherson D."/>
            <person name="Merkulov G."/>
            <person name="Milshina N.V."/>
            <person name="Mobarry C."/>
            <person name="Morris J."/>
            <person name="Moshrefi A."/>
            <person name="Mount S.M."/>
            <person name="Moy M."/>
            <person name="Murphy B."/>
            <person name="Murphy L."/>
            <person name="Muzny D.M."/>
            <person name="Nelson D.L."/>
            <person name="Nelson D.R."/>
            <person name="Nelson K.A."/>
            <person name="Nixon K."/>
            <person name="Nusskern D.R."/>
            <person name="Pacleb J.M."/>
            <person name="Palazzolo M."/>
            <person name="Pittman G.S."/>
            <person name="Pan S."/>
            <person name="Pollard J."/>
            <person name="Puri V."/>
            <person name="Reese M.G."/>
            <person name="Reinert K."/>
            <person name="Remington K."/>
            <person name="Saunders R.D.C."/>
            <person name="Scheeler F."/>
            <person name="Shen H."/>
            <person name="Shue B.C."/>
            <person name="Siden-Kiamos I."/>
            <person name="Simpson M."/>
            <person name="Skupski M.P."/>
            <person name="Smith T.J."/>
            <person name="Spier E."/>
            <person name="Spradling A.C."/>
            <person name="Stapleton M."/>
            <person name="Strong R."/>
            <person name="Sun E."/>
            <person name="Svirskas R."/>
            <person name="Tector C."/>
            <person name="Turner R."/>
            <person name="Venter E."/>
            <person name="Wang A.H."/>
            <person name="Wang X."/>
            <person name="Wang Z.-Y."/>
            <person name="Wassarman D.A."/>
            <person name="Weinstock G.M."/>
            <person name="Weissenbach J."/>
            <person name="Williams S.M."/>
            <person name="Woodage T."/>
            <person name="Worley K.C."/>
            <person name="Wu D."/>
            <person name="Yang S."/>
            <person name="Yao Q.A."/>
            <person name="Ye J."/>
            <person name="Yeh R.-F."/>
            <person name="Zaveri J.S."/>
            <person name="Zhan M."/>
            <person name="Zhang G."/>
            <person name="Zhao Q."/>
            <person name="Zheng L."/>
            <person name="Zheng X.H."/>
            <person name="Zhong F.N."/>
            <person name="Zhong W."/>
            <person name="Zhou X."/>
            <person name="Zhu S.C."/>
            <person name="Zhu X."/>
            <person name="Smith H.O."/>
            <person name="Gibbs R.A."/>
            <person name="Myers E.W."/>
            <person name="Rubin G.M."/>
            <person name="Venter J.C."/>
        </authorList>
    </citation>
    <scope>NUCLEOTIDE SEQUENCE [LARGE SCALE GENOMIC DNA]</scope>
    <source>
        <strain>Berkeley</strain>
    </source>
</reference>
<reference key="2">
    <citation type="journal article" date="2002" name="Genome Biol.">
        <title>Annotation of the Drosophila melanogaster euchromatic genome: a systematic review.</title>
        <authorList>
            <person name="Misra S."/>
            <person name="Crosby M.A."/>
            <person name="Mungall C.J."/>
            <person name="Matthews B.B."/>
            <person name="Campbell K.S."/>
            <person name="Hradecky P."/>
            <person name="Huang Y."/>
            <person name="Kaminker J.S."/>
            <person name="Millburn G.H."/>
            <person name="Prochnik S.E."/>
            <person name="Smith C.D."/>
            <person name="Tupy J.L."/>
            <person name="Whitfield E.J."/>
            <person name="Bayraktaroglu L."/>
            <person name="Berman B.P."/>
            <person name="Bettencourt B.R."/>
            <person name="Celniker S.E."/>
            <person name="de Grey A.D.N.J."/>
            <person name="Drysdale R.A."/>
            <person name="Harris N.L."/>
            <person name="Richter J."/>
            <person name="Russo S."/>
            <person name="Schroeder A.J."/>
            <person name="Shu S.Q."/>
            <person name="Stapleton M."/>
            <person name="Yamada C."/>
            <person name="Ashburner M."/>
            <person name="Gelbart W.M."/>
            <person name="Rubin G.M."/>
            <person name="Lewis S.E."/>
        </authorList>
    </citation>
    <scope>GENOME REANNOTATION</scope>
    <source>
        <strain>Berkeley</strain>
    </source>
</reference>
<reference key="3">
    <citation type="journal article" date="2002" name="Genome Biol.">
        <title>A Drosophila full-length cDNA resource.</title>
        <authorList>
            <person name="Stapleton M."/>
            <person name="Carlson J.W."/>
            <person name="Brokstein P."/>
            <person name="Yu C."/>
            <person name="Champe M."/>
            <person name="George R.A."/>
            <person name="Guarin H."/>
            <person name="Kronmiller B."/>
            <person name="Pacleb J.M."/>
            <person name="Park S."/>
            <person name="Wan K.H."/>
            <person name="Rubin G.M."/>
            <person name="Celniker S.E."/>
        </authorList>
    </citation>
    <scope>NUCLEOTIDE SEQUENCE [LARGE SCALE MRNA]</scope>
    <source>
        <strain>Berkeley</strain>
        <tissue>Head</tissue>
    </source>
</reference>